<organism>
    <name type="scientific">Salmonella newport (strain SL254)</name>
    <dbReference type="NCBI Taxonomy" id="423368"/>
    <lineage>
        <taxon>Bacteria</taxon>
        <taxon>Pseudomonadati</taxon>
        <taxon>Pseudomonadota</taxon>
        <taxon>Gammaproteobacteria</taxon>
        <taxon>Enterobacterales</taxon>
        <taxon>Enterobacteriaceae</taxon>
        <taxon>Salmonella</taxon>
    </lineage>
</organism>
<accession>B4SY76</accession>
<proteinExistence type="inferred from homology"/>
<feature type="chain" id="PRO_1000189110" description="Small heat shock protein IbpB">
    <location>
        <begin position="1"/>
        <end position="142"/>
    </location>
</feature>
<feature type="domain" description="sHSP" evidence="2">
    <location>
        <begin position="26"/>
        <end position="137"/>
    </location>
</feature>
<reference key="1">
    <citation type="journal article" date="2011" name="J. Bacteriol.">
        <title>Comparative genomics of 28 Salmonella enterica isolates: evidence for CRISPR-mediated adaptive sublineage evolution.</title>
        <authorList>
            <person name="Fricke W.F."/>
            <person name="Mammel M.K."/>
            <person name="McDermott P.F."/>
            <person name="Tartera C."/>
            <person name="White D.G."/>
            <person name="Leclerc J.E."/>
            <person name="Ravel J."/>
            <person name="Cebula T.A."/>
        </authorList>
    </citation>
    <scope>NUCLEOTIDE SEQUENCE [LARGE SCALE GENOMIC DNA]</scope>
    <source>
        <strain>SL254</strain>
    </source>
</reference>
<name>IBPB_SALNS</name>
<keyword id="KW-0143">Chaperone</keyword>
<keyword id="KW-0963">Cytoplasm</keyword>
<keyword id="KW-0346">Stress response</keyword>
<sequence length="142" mass="16084">MRNYDLSPLLRQWIGFDKLANALQNSGESQSFPPYNIEKSDDNHYRITLALAGFRQEDLDIQLEGTRLTVKGTPEQPENEPKWLHQGLVMQPFSLSFTLAENMEVSGATFTNGLLHIDLTRNEPETIAPQRIAINERSALNS</sequence>
<evidence type="ECO:0000255" key="1">
    <source>
        <dbReference type="HAMAP-Rule" id="MF_02001"/>
    </source>
</evidence>
<evidence type="ECO:0000255" key="2">
    <source>
        <dbReference type="PROSITE-ProRule" id="PRU00285"/>
    </source>
</evidence>
<comment type="function">
    <text evidence="1">Associates with aggregated proteins, together with IbpA, to stabilize and protect them from irreversible denaturation and extensive proteolysis during heat shock and oxidative stress. Aggregated proteins bound to the IbpAB complex are more efficiently refolded and reactivated by the ATP-dependent chaperone systems ClpB and DnaK/DnaJ/GrpE. Its activity is ATP-independent.</text>
</comment>
<comment type="subunit">
    <text evidence="1">Homodimer. Forms homomultimers of about 100-150 subunits at optimal growth temperatures. Conformation changes to oligomers at high temperatures or high ionic concentrations. The decrease in size of the multimers is accompanied by an increase in chaperone activity.</text>
</comment>
<comment type="subcellular location">
    <subcellularLocation>
        <location evidence="1">Cytoplasm</location>
    </subcellularLocation>
</comment>
<comment type="domain">
    <text evidence="1">The N- and C-terminal flexible termini are involved in oligomerization and in the binding of non-native substrate proteins, and are essential for chaperone activity.</text>
</comment>
<comment type="similarity">
    <text evidence="1 2">Belongs to the small heat shock protein (HSP20) family.</text>
</comment>
<dbReference type="EMBL" id="CP001113">
    <property type="protein sequence ID" value="ACF63990.1"/>
    <property type="molecule type" value="Genomic_DNA"/>
</dbReference>
<dbReference type="RefSeq" id="WP_001246919.1">
    <property type="nucleotide sequence ID" value="NZ_CCMR01000004.1"/>
</dbReference>
<dbReference type="SMR" id="B4SY76"/>
<dbReference type="KEGG" id="see:SNSL254_A4090"/>
<dbReference type="HOGENOM" id="CLU_046737_4_2_6"/>
<dbReference type="Proteomes" id="UP000008824">
    <property type="component" value="Chromosome"/>
</dbReference>
<dbReference type="GO" id="GO:0005737">
    <property type="term" value="C:cytoplasm"/>
    <property type="evidence" value="ECO:0007669"/>
    <property type="project" value="UniProtKB-SubCell"/>
</dbReference>
<dbReference type="GO" id="GO:0050821">
    <property type="term" value="P:protein stabilization"/>
    <property type="evidence" value="ECO:0007669"/>
    <property type="project" value="UniProtKB-UniRule"/>
</dbReference>
<dbReference type="CDD" id="cd06470">
    <property type="entry name" value="ACD_IbpA-B_like"/>
    <property type="match status" value="1"/>
</dbReference>
<dbReference type="Gene3D" id="2.60.40.790">
    <property type="match status" value="1"/>
</dbReference>
<dbReference type="HAMAP" id="MF_02001">
    <property type="entry name" value="HSP20_IbpB"/>
    <property type="match status" value="1"/>
</dbReference>
<dbReference type="InterPro" id="IPR002068">
    <property type="entry name" value="A-crystallin/Hsp20_dom"/>
</dbReference>
<dbReference type="InterPro" id="IPR037913">
    <property type="entry name" value="ACD_IbpA/B"/>
</dbReference>
<dbReference type="InterPro" id="IPR008978">
    <property type="entry name" value="HSP20-like_chaperone"/>
</dbReference>
<dbReference type="InterPro" id="IPR022848">
    <property type="entry name" value="HSP20_IbpB"/>
</dbReference>
<dbReference type="NCBIfam" id="NF008618">
    <property type="entry name" value="PRK11597.1"/>
    <property type="match status" value="1"/>
</dbReference>
<dbReference type="PANTHER" id="PTHR47062">
    <property type="match status" value="1"/>
</dbReference>
<dbReference type="PANTHER" id="PTHR47062:SF2">
    <property type="entry name" value="SMALL HEAT SHOCK PROTEIN IBPB"/>
    <property type="match status" value="1"/>
</dbReference>
<dbReference type="Pfam" id="PF00011">
    <property type="entry name" value="HSP20"/>
    <property type="match status" value="1"/>
</dbReference>
<dbReference type="SUPFAM" id="SSF49764">
    <property type="entry name" value="HSP20-like chaperones"/>
    <property type="match status" value="1"/>
</dbReference>
<dbReference type="PROSITE" id="PS01031">
    <property type="entry name" value="SHSP"/>
    <property type="match status" value="1"/>
</dbReference>
<protein>
    <recommendedName>
        <fullName evidence="1">Small heat shock protein IbpB</fullName>
    </recommendedName>
    <alternativeName>
        <fullName evidence="1">16 kDa heat shock protein B</fullName>
    </alternativeName>
</protein>
<gene>
    <name evidence="1" type="primary">ibpB</name>
    <name type="ordered locus">SNSL254_A4090</name>
</gene>